<evidence type="ECO:0000255" key="1">
    <source>
        <dbReference type="HAMAP-Rule" id="MF_00378"/>
    </source>
</evidence>
<protein>
    <recommendedName>
        <fullName evidence="1">Exodeoxyribonuclease 7 large subunit</fullName>
        <ecNumber evidence="1">3.1.11.6</ecNumber>
    </recommendedName>
    <alternativeName>
        <fullName evidence="1">Exodeoxyribonuclease VII large subunit</fullName>
        <shortName evidence="1">Exonuclease VII large subunit</shortName>
    </alternativeName>
</protein>
<comment type="function">
    <text evidence="1">Bidirectionally degrades single-stranded DNA into large acid-insoluble oligonucleotides, which are then degraded further into small acid-soluble oligonucleotides.</text>
</comment>
<comment type="catalytic activity">
    <reaction evidence="1">
        <text>Exonucleolytic cleavage in either 5'- to 3'- or 3'- to 5'-direction to yield nucleoside 5'-phosphates.</text>
        <dbReference type="EC" id="3.1.11.6"/>
    </reaction>
</comment>
<comment type="subunit">
    <text evidence="1">Heterooligomer composed of large and small subunits.</text>
</comment>
<comment type="subcellular location">
    <subcellularLocation>
        <location evidence="1">Cytoplasm</location>
    </subcellularLocation>
</comment>
<comment type="similarity">
    <text evidence="1">Belongs to the XseA family.</text>
</comment>
<reference key="1">
    <citation type="submission" date="2003-10" db="EMBL/GenBank/DDBJ databases">
        <title>The complete genome sequence of the alkaliphilic Bacillus clausii KSM-K16.</title>
        <authorList>
            <person name="Takaki Y."/>
            <person name="Kageyama Y."/>
            <person name="Shimamura S."/>
            <person name="Suzuki H."/>
            <person name="Nishi S."/>
            <person name="Hatada Y."/>
            <person name="Kawai S."/>
            <person name="Ito S."/>
            <person name="Horikoshi K."/>
        </authorList>
    </citation>
    <scope>NUCLEOTIDE SEQUENCE [LARGE SCALE GENOMIC DNA]</scope>
    <source>
        <strain>KSM-K16</strain>
    </source>
</reference>
<gene>
    <name evidence="1" type="primary">xseA</name>
    <name type="ordered locus">ABC2465</name>
</gene>
<accession>Q5WF60</accession>
<dbReference type="EC" id="3.1.11.6" evidence="1"/>
<dbReference type="EMBL" id="AP006627">
    <property type="protein sequence ID" value="BAD65000.1"/>
    <property type="molecule type" value="Genomic_DNA"/>
</dbReference>
<dbReference type="RefSeq" id="WP_011247308.1">
    <property type="nucleotide sequence ID" value="NC_006582.1"/>
</dbReference>
<dbReference type="SMR" id="Q5WF60"/>
<dbReference type="STRING" id="66692.ABC2465"/>
<dbReference type="KEGG" id="bcl:ABC2465"/>
<dbReference type="eggNOG" id="COG1570">
    <property type="taxonomic scope" value="Bacteria"/>
</dbReference>
<dbReference type="HOGENOM" id="CLU_023625_3_1_9"/>
<dbReference type="OrthoDB" id="9802795at2"/>
<dbReference type="Proteomes" id="UP000001168">
    <property type="component" value="Chromosome"/>
</dbReference>
<dbReference type="GO" id="GO:0005737">
    <property type="term" value="C:cytoplasm"/>
    <property type="evidence" value="ECO:0007669"/>
    <property type="project" value="UniProtKB-SubCell"/>
</dbReference>
<dbReference type="GO" id="GO:0009318">
    <property type="term" value="C:exodeoxyribonuclease VII complex"/>
    <property type="evidence" value="ECO:0007669"/>
    <property type="project" value="InterPro"/>
</dbReference>
<dbReference type="GO" id="GO:0008855">
    <property type="term" value="F:exodeoxyribonuclease VII activity"/>
    <property type="evidence" value="ECO:0007669"/>
    <property type="project" value="UniProtKB-UniRule"/>
</dbReference>
<dbReference type="GO" id="GO:0003676">
    <property type="term" value="F:nucleic acid binding"/>
    <property type="evidence" value="ECO:0007669"/>
    <property type="project" value="InterPro"/>
</dbReference>
<dbReference type="GO" id="GO:0006308">
    <property type="term" value="P:DNA catabolic process"/>
    <property type="evidence" value="ECO:0007669"/>
    <property type="project" value="UniProtKB-UniRule"/>
</dbReference>
<dbReference type="CDD" id="cd04489">
    <property type="entry name" value="ExoVII_LU_OBF"/>
    <property type="match status" value="1"/>
</dbReference>
<dbReference type="HAMAP" id="MF_00378">
    <property type="entry name" value="Exonuc_7_L"/>
    <property type="match status" value="1"/>
</dbReference>
<dbReference type="InterPro" id="IPR003753">
    <property type="entry name" value="Exonuc_VII_L"/>
</dbReference>
<dbReference type="InterPro" id="IPR020579">
    <property type="entry name" value="Exonuc_VII_lsu_C"/>
</dbReference>
<dbReference type="InterPro" id="IPR025824">
    <property type="entry name" value="OB-fold_nuc-bd_dom"/>
</dbReference>
<dbReference type="NCBIfam" id="TIGR00237">
    <property type="entry name" value="xseA"/>
    <property type="match status" value="1"/>
</dbReference>
<dbReference type="PANTHER" id="PTHR30008">
    <property type="entry name" value="EXODEOXYRIBONUCLEASE 7 LARGE SUBUNIT"/>
    <property type="match status" value="1"/>
</dbReference>
<dbReference type="PANTHER" id="PTHR30008:SF0">
    <property type="entry name" value="EXODEOXYRIBONUCLEASE 7 LARGE SUBUNIT"/>
    <property type="match status" value="1"/>
</dbReference>
<dbReference type="Pfam" id="PF02601">
    <property type="entry name" value="Exonuc_VII_L"/>
    <property type="match status" value="1"/>
</dbReference>
<dbReference type="Pfam" id="PF13742">
    <property type="entry name" value="tRNA_anti_2"/>
    <property type="match status" value="1"/>
</dbReference>
<proteinExistence type="inferred from homology"/>
<name>EX7L_SHOC1</name>
<organism>
    <name type="scientific">Shouchella clausii (strain KSM-K16)</name>
    <name type="common">Alkalihalobacillus clausii</name>
    <dbReference type="NCBI Taxonomy" id="66692"/>
    <lineage>
        <taxon>Bacteria</taxon>
        <taxon>Bacillati</taxon>
        <taxon>Bacillota</taxon>
        <taxon>Bacilli</taxon>
        <taxon>Bacillales</taxon>
        <taxon>Bacillaceae</taxon>
        <taxon>Shouchella</taxon>
    </lineage>
</organism>
<keyword id="KW-0963">Cytoplasm</keyword>
<keyword id="KW-0269">Exonuclease</keyword>
<keyword id="KW-0378">Hydrolase</keyword>
<keyword id="KW-0540">Nuclease</keyword>
<keyword id="KW-1185">Reference proteome</keyword>
<feature type="chain" id="PRO_0000273643" description="Exodeoxyribonuclease 7 large subunit">
    <location>
        <begin position="1"/>
        <end position="458"/>
    </location>
</feature>
<sequence>MAGNAGVAEAWTVSEATRYIKQLLEDDPHLPEIWIRGELSNFKQHTRGHMYFTIKDEGSRMQAVMFAGYNRFLRFKPENGMNVLIRGEINVYEPYGQYQFYAKEMQPDGIGSLFAEYERLKKALEAEGLFAEERKRPIPRFPTHIAIITSPTGAVIRDMMTTLKRRYPQIRVTLFPVLVQGEGAPLSISRALEQASMANIFDVVIVARGGGSIEELWAFNEEMVARAIAEAAVPVISAVGHETDFTISDFAADRRAPTPTAAAEFAVPDARELMEHIGHLKKRLERSLVEQVKTRRRELERLKRSYAFRYPVQLVHQKEQQLDGLMERLNRAMQIKLEQKTLAFKHMNQAILRQHPATRVSQLQKERRQNHARLVRAMAAETQRKRQSLSAVIQQLQLLSPLAVMDRGYSLVYKDEALVKTAKDVEIEDDIVVKLADGNLHCQVVGKREMKNGGESNG</sequence>